<dbReference type="EC" id="2.7.1.35" evidence="4"/>
<dbReference type="EMBL" id="AF404865">
    <property type="protein sequence ID" value="AAL57364.2"/>
    <property type="molecule type" value="mRNA"/>
</dbReference>
<dbReference type="EMBL" id="AF400125">
    <property type="protein sequence ID" value="AAK94020.1"/>
    <property type="molecule type" value="Genomic_DNA"/>
</dbReference>
<dbReference type="EMBL" id="AF400125">
    <property type="protein sequence ID" value="AAK94021.1"/>
    <property type="molecule type" value="Genomic_DNA"/>
</dbReference>
<dbReference type="EMBL" id="AB012241">
    <property type="protein sequence ID" value="BAB09031.1"/>
    <property type="molecule type" value="Genomic_DNA"/>
</dbReference>
<dbReference type="EMBL" id="CP002688">
    <property type="protein sequence ID" value="AED94239.1"/>
    <property type="molecule type" value="Genomic_DNA"/>
</dbReference>
<dbReference type="EMBL" id="CP002688">
    <property type="protein sequence ID" value="AED94240.1"/>
    <property type="molecule type" value="Genomic_DNA"/>
</dbReference>
<dbReference type="EMBL" id="CP002688">
    <property type="protein sequence ID" value="ANM69628.1"/>
    <property type="molecule type" value="Genomic_DNA"/>
</dbReference>
<dbReference type="EMBL" id="AY136333">
    <property type="protein sequence ID" value="AAM96999.1"/>
    <property type="molecule type" value="mRNA"/>
</dbReference>
<dbReference type="EMBL" id="BT008815">
    <property type="protein sequence ID" value="AAP68254.1"/>
    <property type="molecule type" value="mRNA"/>
</dbReference>
<dbReference type="EMBL" id="AY084419">
    <property type="protein sequence ID" value="AAM60993.1"/>
    <property type="molecule type" value="mRNA"/>
</dbReference>
<dbReference type="RefSeq" id="NP_001078677.1">
    <molecule id="Q8W1X2-1"/>
    <property type="nucleotide sequence ID" value="NM_001085208.2"/>
</dbReference>
<dbReference type="RefSeq" id="NP_001331291.1">
    <molecule id="Q8W1X2-1"/>
    <property type="nucleotide sequence ID" value="NM_001344222.1"/>
</dbReference>
<dbReference type="RefSeq" id="NP_198601.2">
    <molecule id="Q8W1X2-2"/>
    <property type="nucleotide sequence ID" value="NM_123144.4"/>
</dbReference>
<dbReference type="SMR" id="Q8W1X2"/>
<dbReference type="BioGRID" id="19014">
    <property type="interactions" value="2"/>
</dbReference>
<dbReference type="FunCoup" id="Q8W1X2">
    <property type="interactions" value="3096"/>
</dbReference>
<dbReference type="STRING" id="3702.Q8W1X2"/>
<dbReference type="iPTMnet" id="Q8W1X2"/>
<dbReference type="PaxDb" id="3702-AT5G37850.1"/>
<dbReference type="ProteomicsDB" id="236763">
    <molecule id="Q8W1X2-1"/>
</dbReference>
<dbReference type="EnsemblPlants" id="AT5G37850.1">
    <molecule id="Q8W1X2-2"/>
    <property type="protein sequence ID" value="AT5G37850.1"/>
    <property type="gene ID" value="AT5G37850"/>
</dbReference>
<dbReference type="EnsemblPlants" id="AT5G37850.2">
    <molecule id="Q8W1X2-1"/>
    <property type="protein sequence ID" value="AT5G37850.2"/>
    <property type="gene ID" value="AT5G37850"/>
</dbReference>
<dbReference type="EnsemblPlants" id="AT5G37850.4">
    <molecule id="Q8W1X2-1"/>
    <property type="protein sequence ID" value="AT5G37850.4"/>
    <property type="gene ID" value="AT5G37850"/>
</dbReference>
<dbReference type="GeneID" id="833763"/>
<dbReference type="Gramene" id="AT5G37850.1">
    <molecule id="Q8W1X2-2"/>
    <property type="protein sequence ID" value="AT5G37850.1"/>
    <property type="gene ID" value="AT5G37850"/>
</dbReference>
<dbReference type="Gramene" id="AT5G37850.2">
    <molecule id="Q8W1X2-1"/>
    <property type="protein sequence ID" value="AT5G37850.2"/>
    <property type="gene ID" value="AT5G37850"/>
</dbReference>
<dbReference type="Gramene" id="AT5G37850.4">
    <molecule id="Q8W1X2-1"/>
    <property type="protein sequence ID" value="AT5G37850.4"/>
    <property type="gene ID" value="AT5G37850"/>
</dbReference>
<dbReference type="KEGG" id="ath:AT5G37850"/>
<dbReference type="Araport" id="AT5G37850"/>
<dbReference type="TAIR" id="AT5G37850">
    <property type="gene designation" value="SOS4"/>
</dbReference>
<dbReference type="eggNOG" id="KOG2599">
    <property type="taxonomic scope" value="Eukaryota"/>
</dbReference>
<dbReference type="InParanoid" id="Q8W1X2"/>
<dbReference type="OMA" id="HTQYGQW"/>
<dbReference type="OrthoDB" id="3689at2759"/>
<dbReference type="PhylomeDB" id="Q8W1X2"/>
<dbReference type="BRENDA" id="2.7.1.35">
    <property type="organism ID" value="399"/>
</dbReference>
<dbReference type="UniPathway" id="UPA01068">
    <property type="reaction ID" value="UER00298"/>
</dbReference>
<dbReference type="PRO" id="PR:Q8W1X2"/>
<dbReference type="Proteomes" id="UP000006548">
    <property type="component" value="Chromosome 5"/>
</dbReference>
<dbReference type="ExpressionAtlas" id="Q8W1X2">
    <property type="expression patterns" value="baseline and differential"/>
</dbReference>
<dbReference type="GO" id="GO:0009507">
    <property type="term" value="C:chloroplast"/>
    <property type="evidence" value="ECO:0007005"/>
    <property type="project" value="TAIR"/>
</dbReference>
<dbReference type="GO" id="GO:0009536">
    <property type="term" value="C:plastid"/>
    <property type="evidence" value="ECO:0007005"/>
    <property type="project" value="TAIR"/>
</dbReference>
<dbReference type="GO" id="GO:0005524">
    <property type="term" value="F:ATP binding"/>
    <property type="evidence" value="ECO:0007669"/>
    <property type="project" value="UniProtKB-KW"/>
</dbReference>
<dbReference type="GO" id="GO:0046872">
    <property type="term" value="F:metal ion binding"/>
    <property type="evidence" value="ECO:0007669"/>
    <property type="project" value="UniProtKB-KW"/>
</dbReference>
<dbReference type="GO" id="GO:0008478">
    <property type="term" value="F:pyridoxal kinase activity"/>
    <property type="evidence" value="ECO:0000314"/>
    <property type="project" value="TAIR"/>
</dbReference>
<dbReference type="GO" id="GO:0042538">
    <property type="term" value="P:hyperosmotic salinity response"/>
    <property type="evidence" value="ECO:0000315"/>
    <property type="project" value="TAIR"/>
</dbReference>
<dbReference type="GO" id="GO:0009443">
    <property type="term" value="P:pyridoxal 5'-phosphate salvage"/>
    <property type="evidence" value="ECO:0000314"/>
    <property type="project" value="TAIR"/>
</dbReference>
<dbReference type="GO" id="GO:0008615">
    <property type="term" value="P:pyridoxine biosynthetic process"/>
    <property type="evidence" value="ECO:0000304"/>
    <property type="project" value="TAIR"/>
</dbReference>
<dbReference type="GO" id="GO:0010054">
    <property type="term" value="P:trichoblast differentiation"/>
    <property type="evidence" value="ECO:0000315"/>
    <property type="project" value="TAIR"/>
</dbReference>
<dbReference type="CDD" id="cd01173">
    <property type="entry name" value="pyridoxal_pyridoxamine_kinase"/>
    <property type="match status" value="1"/>
</dbReference>
<dbReference type="Gene3D" id="3.40.1190.20">
    <property type="match status" value="1"/>
</dbReference>
<dbReference type="InterPro" id="IPR013749">
    <property type="entry name" value="PM/HMP-P_kinase-1"/>
</dbReference>
<dbReference type="InterPro" id="IPR004625">
    <property type="entry name" value="PyrdxlKinase"/>
</dbReference>
<dbReference type="InterPro" id="IPR029056">
    <property type="entry name" value="Ribokinase-like"/>
</dbReference>
<dbReference type="NCBIfam" id="TIGR00687">
    <property type="entry name" value="pyridox_kin"/>
    <property type="match status" value="1"/>
</dbReference>
<dbReference type="PANTHER" id="PTHR10534">
    <property type="entry name" value="PYRIDOXAL KINASE"/>
    <property type="match status" value="1"/>
</dbReference>
<dbReference type="PANTHER" id="PTHR10534:SF2">
    <property type="entry name" value="PYRIDOXAL KINASE"/>
    <property type="match status" value="1"/>
</dbReference>
<dbReference type="Pfam" id="PF08543">
    <property type="entry name" value="Phos_pyr_kin"/>
    <property type="match status" value="1"/>
</dbReference>
<dbReference type="SUPFAM" id="SSF53613">
    <property type="entry name" value="Ribokinase-like"/>
    <property type="match status" value="1"/>
</dbReference>
<feature type="chain" id="PRO_0000213341" description="Pyridoxal kinase">
    <location>
        <begin position="1"/>
        <end position="309"/>
    </location>
</feature>
<feature type="initiator methionine" description="Removed; alternate" evidence="11">
    <location>
        <position position="1"/>
    </location>
</feature>
<feature type="chain" id="PRO_0000434371" description="Pyridoxal kinase, N-terminally processed">
    <location>
        <begin position="2"/>
        <end position="309"/>
    </location>
</feature>
<feature type="active site" description="Proton acceptor" evidence="1">
    <location>
        <position position="234"/>
    </location>
</feature>
<feature type="binding site" evidence="1">
    <location>
        <position position="23"/>
    </location>
    <ligand>
        <name>pyridoxal</name>
        <dbReference type="ChEBI" id="CHEBI:17310"/>
    </ligand>
</feature>
<feature type="binding site" evidence="1">
    <location>
        <position position="58"/>
    </location>
    <ligand>
        <name>pyridoxal</name>
        <dbReference type="ChEBI" id="CHEBI:17310"/>
    </ligand>
</feature>
<feature type="binding site" evidence="1">
    <location>
        <position position="58"/>
    </location>
    <ligand>
        <name>pyridoxal 5'-phosphate</name>
        <dbReference type="ChEBI" id="CHEBI:597326"/>
    </ligand>
</feature>
<feature type="binding site" evidence="1">
    <location>
        <position position="124"/>
    </location>
    <ligand>
        <name>ATP</name>
        <dbReference type="ChEBI" id="CHEBI:30616"/>
    </ligand>
</feature>
<feature type="binding site" evidence="1">
    <location>
        <position position="124"/>
    </location>
    <ligand>
        <name>Na(+)</name>
        <dbReference type="ChEBI" id="CHEBI:29101"/>
    </ligand>
</feature>
<feature type="binding site" evidence="1">
    <location>
        <position position="129"/>
    </location>
    <ligand>
        <name>Mg(2+)</name>
        <dbReference type="ChEBI" id="CHEBI:18420"/>
    </ligand>
</feature>
<feature type="binding site" evidence="1">
    <location>
        <position position="155"/>
    </location>
    <ligand>
        <name>Na(+)</name>
        <dbReference type="ChEBI" id="CHEBI:29101"/>
    </ligand>
</feature>
<feature type="binding site" evidence="1">
    <location>
        <begin position="157"/>
        <end position="160"/>
    </location>
    <ligand>
        <name>ATP</name>
        <dbReference type="ChEBI" id="CHEBI:30616"/>
    </ligand>
</feature>
<feature type="binding site" evidence="1">
    <location>
        <begin position="193"/>
        <end position="194"/>
    </location>
    <ligand>
        <name>ATP</name>
        <dbReference type="ChEBI" id="CHEBI:30616"/>
    </ligand>
</feature>
<feature type="binding site" evidence="1">
    <location>
        <position position="193"/>
    </location>
    <ligand>
        <name>Na(+)</name>
        <dbReference type="ChEBI" id="CHEBI:29101"/>
    </ligand>
</feature>
<feature type="binding site" evidence="1">
    <location>
        <begin position="225"/>
        <end position="227"/>
    </location>
    <ligand>
        <name>ATP</name>
        <dbReference type="ChEBI" id="CHEBI:30616"/>
    </ligand>
</feature>
<feature type="binding site" evidence="1">
    <location>
        <position position="232"/>
    </location>
    <ligand>
        <name>ATP</name>
        <dbReference type="ChEBI" id="CHEBI:30616"/>
    </ligand>
</feature>
<feature type="binding site" evidence="1">
    <location>
        <begin position="233"/>
        <end position="234"/>
    </location>
    <ligand>
        <name>pyridoxal 5'-phosphate</name>
        <dbReference type="ChEBI" id="CHEBI:597326"/>
    </ligand>
</feature>
<feature type="modified residue" description="N-acetylthreonine; in Pyridoxal kinase, N-terminally processed" evidence="11">
    <location>
        <position position="2"/>
    </location>
</feature>
<feature type="splice variant" id="VSP_004654" description="In isoform 2." evidence="8">
    <original>M</original>
    <variation>MPFSFPTTTTTSLPFHKDHNHFNLNRNLRSRNRRM</variation>
    <location>
        <position position="1"/>
    </location>
</feature>
<comment type="function">
    <text evidence="2 3 4">Catalyzes the transfer of a phosphate group from ATP to the 5-hydroxylmethyl group of pyridoxal to form the biologically active pyridoxal phosphate, an active form of vitamin B6 (PubMed:12068103, PubMed:12244454). Required for Na(+) and K(+) homeostasis and for salt tolerance (PubMed:11910005). Involved in root hair development, both for initiation and tip growth (PubMed:12068103).</text>
</comment>
<comment type="catalytic activity">
    <reaction evidence="4">
        <text>pyridoxal + ATP = pyridoxal 5'-phosphate + ADP + H(+)</text>
        <dbReference type="Rhea" id="RHEA:10224"/>
        <dbReference type="ChEBI" id="CHEBI:15378"/>
        <dbReference type="ChEBI" id="CHEBI:17310"/>
        <dbReference type="ChEBI" id="CHEBI:30616"/>
        <dbReference type="ChEBI" id="CHEBI:456216"/>
        <dbReference type="ChEBI" id="CHEBI:597326"/>
        <dbReference type="EC" id="2.7.1.35"/>
    </reaction>
</comment>
<comment type="cofactor">
    <cofactor evidence="4">
        <name>Zn(2+)</name>
        <dbReference type="ChEBI" id="CHEBI:29105"/>
    </cofactor>
    <text evidence="4">Divalent metal cations. Zn(2+) &gt;&gt; Co(2+) &gt; Mg(2+) &gt; Mn(2+) &gt; Ca(2+).</text>
</comment>
<comment type="biophysicochemical properties">
    <kinetics>
        <KM evidence="4">98 uM for ATP</KM>
        <KM evidence="4">688 uM for pyridoxal</KM>
        <Vmax evidence="4">1.604 mmol/min/mg enzyme</Vmax>
    </kinetics>
    <phDependence>
        <text evidence="4">Optimum pH is 6.0. Active from pH 4.5 to 10.5.</text>
    </phDependence>
</comment>
<comment type="pathway">
    <text evidence="4">Cofactor metabolism; pyridoxal 5'-phosphate salvage; pyridoxal 5'-phosphate from pyridoxal: step 1/1.</text>
</comment>
<comment type="subunit">
    <text evidence="4">Homodimer.</text>
</comment>
<comment type="alternative products">
    <event type="alternative splicing"/>
    <isoform>
        <id>Q8W1X2-1</id>
        <name>1</name>
        <sequence type="displayed"/>
    </isoform>
    <isoform>
        <id>Q8W1X2-2</id>
        <name>2</name>
        <sequence type="described" ref="VSP_004654"/>
    </isoform>
</comment>
<comment type="tissue specificity">
    <text evidence="3 4">Expressed ubiquitously in leaves, stems, roots, flowers and siliques (PubMed:12244454). Present in root hairs and other tip-growing cells such as papillar cells on the top of stigma (PubMed:12068103).</text>
</comment>
<comment type="developmental stage">
    <text evidence="4">Becomes detectable 60 hours after imbibition of the seeds and remains constant up to 101 hours after imbibition.</text>
</comment>
<comment type="induction">
    <text evidence="2">Both long and short transcripts are down-regulated in roots but not in shoots by NaCl and abscisic acid treatment (PubMed:11910005). Under cold stress, the expression of the short transcript is increased while the long one becomes undetectable (PubMed:11910005).</text>
</comment>
<comment type="disruption phenotype">
    <text evidence="2 3">Defective pyridoxal kinase results in both salt hypersensitive and root hairless phenotypes (PubMed:11910005, PubMed:12068103). Hypersensitivity to Na(+), K(+) and Li(+) ions (PubMed:11910005). Increased accumulation of Na(+) ions but reduced K(+) retaining under NaCl stress (PubMed:11910005).</text>
</comment>
<comment type="similarity">
    <text evidence="8">Belongs to the pyridoxine kinase family.</text>
</comment>
<name>PDXK_ARATH</name>
<keyword id="KW-0007">Acetylation</keyword>
<keyword id="KW-0025">Alternative splicing</keyword>
<keyword id="KW-0067">ATP-binding</keyword>
<keyword id="KW-0903">Direct protein sequencing</keyword>
<keyword id="KW-0418">Kinase</keyword>
<keyword id="KW-0460">Magnesium</keyword>
<keyword id="KW-0479">Metal-binding</keyword>
<keyword id="KW-0547">Nucleotide-binding</keyword>
<keyword id="KW-0663">Pyridoxal phosphate</keyword>
<keyword id="KW-1185">Reference proteome</keyword>
<keyword id="KW-0915">Sodium</keyword>
<keyword id="KW-0808">Transferase</keyword>
<keyword id="KW-0862">Zinc</keyword>
<evidence type="ECO:0000250" key="1">
    <source>
        <dbReference type="UniProtKB" id="O00764"/>
    </source>
</evidence>
<evidence type="ECO:0000269" key="2">
    <source>
    </source>
</evidence>
<evidence type="ECO:0000269" key="3">
    <source>
    </source>
</evidence>
<evidence type="ECO:0000269" key="4">
    <source>
    </source>
</evidence>
<evidence type="ECO:0000303" key="5">
    <source>
    </source>
</evidence>
<evidence type="ECO:0000303" key="6">
    <source>
    </source>
</evidence>
<evidence type="ECO:0000303" key="7">
    <source>
    </source>
</evidence>
<evidence type="ECO:0000305" key="8"/>
<evidence type="ECO:0000312" key="9">
    <source>
        <dbReference type="Araport" id="AT5G37850"/>
    </source>
</evidence>
<evidence type="ECO:0000312" key="10">
    <source>
        <dbReference type="EMBL" id="BAB09031.1"/>
    </source>
</evidence>
<evidence type="ECO:0007744" key="11">
    <source>
    </source>
</evidence>
<gene>
    <name evidence="7" type="primary">PK</name>
    <name type="synonym">PDXK</name>
    <name evidence="5 6" type="synonym">SOS4</name>
    <name evidence="9" type="ordered locus">At5g37850</name>
    <name evidence="10" type="ORF">K18L3.2</name>
</gene>
<sequence length="309" mass="34043">MTTPPVLSLALPSDTGRVLSIQSHTVQGYVGNKSAVFPLQLLGYDVDPINSVQFSNHTGYPTFKGQVLNGQQLCDLIEGLEANDLLFYTHVLTGYIGSVSFLDTILEVINKLRSVNPNLTYVCDPVMGDEGKLYVPEELVHVYREKVVPLASMLTPNQFEAEKLTGLRINSEEDGREACAILHAAGPSKVVITSITIGGILLLIGSHQKEKGLKPEQFKILIHKIPAYFTGTGDLMTALLLGWSNKYPDNLDKAAELAVSTLQALLRRTLDDYKRAGYDPTSSSLEIRLIQSQEDIRNPKVELKAERYS</sequence>
<proteinExistence type="evidence at protein level"/>
<reference key="1">
    <citation type="journal article" date="2002" name="Planta">
        <title>Cloning and characterization of Arabidopsis thaliana pyridoxal kinase.</title>
        <authorList>
            <person name="Lum H.-K."/>
            <person name="Kwok F."/>
            <person name="Lo S.C.L."/>
        </authorList>
    </citation>
    <scope>NUCLEOTIDE SEQUENCE [MRNA] (ISOFORM 1)</scope>
    <scope>PROTEIN SEQUENCE OF 1-12</scope>
    <scope>FUNCTION</scope>
    <scope>BIOPHYSICOCHEMICAL PROPERTIES</scope>
    <scope>CATALYTIC ACTIVITY</scope>
    <scope>PATHWAY</scope>
    <scope>TISSUE SPECIFICITY</scope>
    <scope>DEVELOPMENTAL STAGE</scope>
    <scope>HOMODIMERIZATION</scope>
    <source>
        <strain>cv. Columbia</strain>
    </source>
</reference>
<reference key="2">
    <citation type="journal article" date="2002" name="Plant Cell">
        <title>The Arabidopsis salt overly sensitive 4 mutants uncover a critical role for vitamin B6 in plant salt tolerance.</title>
        <authorList>
            <person name="Shi H."/>
            <person name="Xiong L."/>
            <person name="Stevenson B."/>
            <person name="Lu T."/>
            <person name="Zhu J.-K."/>
        </authorList>
    </citation>
    <scope>NUCLEOTIDE SEQUENCE [GENOMIC DNA] (ISOFORMS 1 AND 2)</scope>
    <scope>DISRUPTION PHENOTYPE</scope>
    <scope>TISSUE SPECIFICITY</scope>
    <scope>FUNCTION</scope>
    <scope>INDUCTION</scope>
    <source>
        <strain>cv. Columbia</strain>
    </source>
</reference>
<reference key="3">
    <citation type="journal article" date="1998" name="DNA Res.">
        <title>Structural analysis of Arabidopsis thaliana chromosome 5. VI. Sequence features of the regions of 1,367,185 bp covered by 19 physically assigned P1 and TAC clones.</title>
        <authorList>
            <person name="Kotani H."/>
            <person name="Nakamura Y."/>
            <person name="Sato S."/>
            <person name="Asamizu E."/>
            <person name="Kaneko T."/>
            <person name="Miyajima N."/>
            <person name="Tabata S."/>
        </authorList>
    </citation>
    <scope>NUCLEOTIDE SEQUENCE [LARGE SCALE GENOMIC DNA]</scope>
    <source>
        <strain>cv. Columbia</strain>
    </source>
</reference>
<reference key="4">
    <citation type="journal article" date="2017" name="Plant J.">
        <title>Araport11: a complete reannotation of the Arabidopsis thaliana reference genome.</title>
        <authorList>
            <person name="Cheng C.Y."/>
            <person name="Krishnakumar V."/>
            <person name="Chan A.P."/>
            <person name="Thibaud-Nissen F."/>
            <person name="Schobel S."/>
            <person name="Town C.D."/>
        </authorList>
    </citation>
    <scope>GENOME REANNOTATION</scope>
    <source>
        <strain>cv. Columbia</strain>
    </source>
</reference>
<reference key="5">
    <citation type="journal article" date="2003" name="Science">
        <title>Empirical analysis of transcriptional activity in the Arabidopsis genome.</title>
        <authorList>
            <person name="Yamada K."/>
            <person name="Lim J."/>
            <person name="Dale J.M."/>
            <person name="Chen H."/>
            <person name="Shinn P."/>
            <person name="Palm C.J."/>
            <person name="Southwick A.M."/>
            <person name="Wu H.C."/>
            <person name="Kim C.J."/>
            <person name="Nguyen M."/>
            <person name="Pham P.K."/>
            <person name="Cheuk R.F."/>
            <person name="Karlin-Newmann G."/>
            <person name="Liu S.X."/>
            <person name="Lam B."/>
            <person name="Sakano H."/>
            <person name="Wu T."/>
            <person name="Yu G."/>
            <person name="Miranda M."/>
            <person name="Quach H.L."/>
            <person name="Tripp M."/>
            <person name="Chang C.H."/>
            <person name="Lee J.M."/>
            <person name="Toriumi M.J."/>
            <person name="Chan M.M."/>
            <person name="Tang C.C."/>
            <person name="Onodera C.S."/>
            <person name="Deng J.M."/>
            <person name="Akiyama K."/>
            <person name="Ansari Y."/>
            <person name="Arakawa T."/>
            <person name="Banh J."/>
            <person name="Banno F."/>
            <person name="Bowser L."/>
            <person name="Brooks S.Y."/>
            <person name="Carninci P."/>
            <person name="Chao Q."/>
            <person name="Choy N."/>
            <person name="Enju A."/>
            <person name="Goldsmith A.D."/>
            <person name="Gurjal M."/>
            <person name="Hansen N.F."/>
            <person name="Hayashizaki Y."/>
            <person name="Johnson-Hopson C."/>
            <person name="Hsuan V.W."/>
            <person name="Iida K."/>
            <person name="Karnes M."/>
            <person name="Khan S."/>
            <person name="Koesema E."/>
            <person name="Ishida J."/>
            <person name="Jiang P.X."/>
            <person name="Jones T."/>
            <person name="Kawai J."/>
            <person name="Kamiya A."/>
            <person name="Meyers C."/>
            <person name="Nakajima M."/>
            <person name="Narusaka M."/>
            <person name="Seki M."/>
            <person name="Sakurai T."/>
            <person name="Satou M."/>
            <person name="Tamse R."/>
            <person name="Vaysberg M."/>
            <person name="Wallender E.K."/>
            <person name="Wong C."/>
            <person name="Yamamura Y."/>
            <person name="Yuan S."/>
            <person name="Shinozaki K."/>
            <person name="Davis R.W."/>
            <person name="Theologis A."/>
            <person name="Ecker J.R."/>
        </authorList>
    </citation>
    <scope>NUCLEOTIDE SEQUENCE [LARGE SCALE MRNA] (ISOFORM 1)</scope>
    <source>
        <strain>cv. Columbia</strain>
    </source>
</reference>
<reference key="6">
    <citation type="submission" date="2002-03" db="EMBL/GenBank/DDBJ databases">
        <title>Full-length cDNA from Arabidopsis thaliana.</title>
        <authorList>
            <person name="Brover V.V."/>
            <person name="Troukhan M.E."/>
            <person name="Alexandrov N.A."/>
            <person name="Lu Y.-P."/>
            <person name="Flavell R.B."/>
            <person name="Feldmann K.A."/>
        </authorList>
    </citation>
    <scope>NUCLEOTIDE SEQUENCE [LARGE SCALE MRNA] (ISOFORM 1)</scope>
</reference>
<reference key="7">
    <citation type="journal article" date="2002" name="Plant Physiol.">
        <title>SOS4, a pyridoxal kinase gene, is required for root hair development in Arabidopsis.</title>
        <authorList>
            <person name="Shi H."/>
            <person name="Zhu J.-K."/>
        </authorList>
    </citation>
    <scope>FUNCTION</scope>
    <scope>DISRUPTION PHENOTYPE</scope>
    <scope>TISSUE SPECIFICITY</scope>
</reference>
<reference key="8">
    <citation type="journal article" date="2012" name="Mol. Cell. Proteomics">
        <title>Comparative large-scale characterisation of plant vs. mammal proteins reveals similar and idiosyncratic N-alpha acetylation features.</title>
        <authorList>
            <person name="Bienvenut W.V."/>
            <person name="Sumpton D."/>
            <person name="Martinez A."/>
            <person name="Lilla S."/>
            <person name="Espagne C."/>
            <person name="Meinnel T."/>
            <person name="Giglione C."/>
        </authorList>
    </citation>
    <scope>ACETYLATION [LARGE SCALE ANALYSIS] AT THR-2</scope>
    <scope>CLEAVAGE OF INITIATOR METHIONINE [LARGE SCALE ANALYSIS]</scope>
    <scope>IDENTIFICATION BY MASS SPECTROMETRY [LARGE SCALE ANALYSIS]</scope>
</reference>
<organism>
    <name type="scientific">Arabidopsis thaliana</name>
    <name type="common">Mouse-ear cress</name>
    <dbReference type="NCBI Taxonomy" id="3702"/>
    <lineage>
        <taxon>Eukaryota</taxon>
        <taxon>Viridiplantae</taxon>
        <taxon>Streptophyta</taxon>
        <taxon>Embryophyta</taxon>
        <taxon>Tracheophyta</taxon>
        <taxon>Spermatophyta</taxon>
        <taxon>Magnoliopsida</taxon>
        <taxon>eudicotyledons</taxon>
        <taxon>Gunneridae</taxon>
        <taxon>Pentapetalae</taxon>
        <taxon>rosids</taxon>
        <taxon>malvids</taxon>
        <taxon>Brassicales</taxon>
        <taxon>Brassicaceae</taxon>
        <taxon>Camelineae</taxon>
        <taxon>Arabidopsis</taxon>
    </lineage>
</organism>
<accession>Q8W1X2</accession>
<accession>Q94EN4</accession>
<accession>Q9FKE1</accession>
<protein>
    <recommendedName>
        <fullName evidence="7">Pyridoxal kinase</fullName>
        <ecNumber evidence="4">2.7.1.35</ecNumber>
    </recommendedName>
    <alternativeName>
        <fullName evidence="5 6">Protein SALT OVERLY SENSITIVE 4</fullName>
    </alternativeName>
    <alternativeName>
        <fullName evidence="5">Pyridoxal kinase-like protein SOS4</fullName>
    </alternativeName>
    <alternativeName>
        <fullName evidence="7">Pyridoxine kinase</fullName>
    </alternativeName>
    <component>
        <recommendedName>
            <fullName evidence="7">Pyridoxal kinase, N-terminally processed</fullName>
        </recommendedName>
    </component>
</protein>